<comment type="function">
    <text evidence="1 5 8">Has a strict specificity for hydrolysis of asparaginyl bonds (PubMed:23776206). Can also cleave aspartyl bonds slowly, especially under acidic conditions (PubMed:23776206). Involved in the processing of proteins for MHC class II antigen presentation in the lysosomal/endosomal system (PubMed:9872320). Also involved in MHC class I antigen presentation in cross-presenting dendritic cells by mediating cleavage and maturation of Perforin-2 (MPEG1), thereby promoting antigen translocation in the cytosol (By similarity). Required for normal lysosomal protein degradation in renal proximal tubules (By similarity). Required for normal degradation of internalized EGFR (By similarity). Plays a role in the regulation of cell proliferation via its role in EGFR degradation (By similarity).</text>
</comment>
<comment type="catalytic activity">
    <reaction evidence="5 8">
        <text>Hydrolysis of proteins and small molecule substrates at -Asn-|-Xaa- bonds.</text>
        <dbReference type="EC" id="3.4.22.34"/>
    </reaction>
</comment>
<comment type="activity regulation">
    <text evidence="6">Inhibited by CST6.</text>
</comment>
<comment type="biophysicochemical properties">
    <phDependence>
        <text evidence="5">Optimum pH is 5.5 for the free enzyme, and pH 6 in the presence of bound integrins.</text>
    </phDependence>
</comment>
<comment type="subunit">
    <text evidence="5">Homodimer before autocatalytic removal of the propeptide (PubMed:23776206). Monomer after autocatalytic processing (PubMed:23776206). May interact with integrins (PubMed:23776206).</text>
</comment>
<comment type="interaction">
    <interactant intactId="EBI-29020361">
        <id>PRO_0000026502</id>
    </interactant>
    <interactant intactId="EBI-29036734">
        <id>PRO_0000006639</id>
        <label>CST3</label>
        <dbReference type="UniProtKB" id="P01034"/>
    </interactant>
    <organismsDiffer>false</organismsDiffer>
    <experiments>4</experiments>
</comment>
<comment type="interaction">
    <interactant intactId="EBI-29020361">
        <id>PRO_0000026502</id>
    </interactant>
    <interactant intactId="EBI-29014783">
        <id>PRO_0000006648</id>
        <label>CST6</label>
        <dbReference type="UniProtKB" id="Q15828"/>
    </interactant>
    <organismsDiffer>false</organismsDiffer>
    <experiments>5</experiments>
</comment>
<comment type="subcellular location">
    <subcellularLocation>
        <location evidence="8">Lysosome</location>
    </subcellularLocation>
</comment>
<comment type="alternative products">
    <event type="alternative splicing"/>
    <isoform>
        <id>Q99538-1</id>
        <name>1</name>
        <sequence type="displayed"/>
    </isoform>
    <isoform>
        <id>Q99538-2</id>
        <name>2</name>
        <sequence type="described" ref="VSP_056454"/>
    </isoform>
    <isoform>
        <id>Q99538-3</id>
        <name>3</name>
        <sequence type="described" ref="VSP_056455 VSP_056456"/>
    </isoform>
</comment>
<comment type="tissue specificity">
    <text evidence="7">Ubiquitous. Particularly abundant in kidney, heart and placenta.</text>
</comment>
<comment type="domain">
    <text evidence="5">In the zymogen form, the uncleaved propeptide blocks access to the active site.</text>
</comment>
<comment type="PTM">
    <text evidence="2">Activated by autocatalytic processing at pH 4.</text>
</comment>
<comment type="similarity">
    <text evidence="14">Belongs to the peptidase C13 family.</text>
</comment>
<keyword id="KW-0002">3D-structure</keyword>
<keyword id="KW-0025">Alternative splicing</keyword>
<keyword id="KW-0903">Direct protein sequencing</keyword>
<keyword id="KW-1015">Disulfide bond</keyword>
<keyword id="KW-0325">Glycoprotein</keyword>
<keyword id="KW-0378">Hydrolase</keyword>
<keyword id="KW-0458">Lysosome</keyword>
<keyword id="KW-0645">Protease</keyword>
<keyword id="KW-1267">Proteomics identification</keyword>
<keyword id="KW-1185">Reference proteome</keyword>
<keyword id="KW-0732">Signal</keyword>
<keyword id="KW-0788">Thiol protease</keyword>
<keyword id="KW-0865">Zymogen</keyword>
<protein>
    <recommendedName>
        <fullName evidence="11">Legumain</fullName>
        <ecNumber evidence="5 8">3.4.22.34</ecNumber>
    </recommendedName>
    <alternativeName>
        <fullName evidence="12">Asparaginyl endopeptidase</fullName>
        <shortName evidence="12">AEP</shortName>
    </alternativeName>
    <alternativeName>
        <fullName evidence="10">Protease, cysteine 1</fullName>
    </alternativeName>
</protein>
<accession>Q99538</accession>
<accession>O00123</accession>
<accession>Q86TV2</accession>
<accession>Q86TV3</accession>
<accession>Q9BTY1</accession>
<sequence>MVWKVAVFLSVALGIGAVPIDDPEDGGKHWVVIVAGSNGWYNYRHQADACHAYQIIHRNGIPDEQIVVMMYDDIAYSEDNPTPGIVINRPNGTDVYQGVPKDYTGEDVTPQNFLAVLRGDAEAVKGIGSGKVLKSGPQDHVFIYFTDHGSTGILVFPNEDLHVKDLNETIHYMYKHKMYRKMVFYIEACESGSMMNHLPDNINVYATTAANPRESSYACYYDEKRSTYLGDWYSVNWMEDSDVEDLTKETLHKQYHLVKSHTNTSHVMQYGNKTISTMKVMQFQGMKRKASSPVPLPPVTHLDLTPSPDVPLTIMKRKLMNTNDLEESRQLTEEIQRHLDARHLIEKSVRKIVSLLAASEAEVEQLLSERAPLTGHSCYPEALLHFRTHCFNWHSPTYEYALRHLYVLVNLCEKPYPLHRIKLSMDHVCLGHY</sequence>
<organism>
    <name type="scientific">Homo sapiens</name>
    <name type="common">Human</name>
    <dbReference type="NCBI Taxonomy" id="9606"/>
    <lineage>
        <taxon>Eukaryota</taxon>
        <taxon>Metazoa</taxon>
        <taxon>Chordata</taxon>
        <taxon>Craniata</taxon>
        <taxon>Vertebrata</taxon>
        <taxon>Euteleostomi</taxon>
        <taxon>Mammalia</taxon>
        <taxon>Eutheria</taxon>
        <taxon>Euarchontoglires</taxon>
        <taxon>Primates</taxon>
        <taxon>Haplorrhini</taxon>
        <taxon>Catarrhini</taxon>
        <taxon>Hominidae</taxon>
        <taxon>Homo</taxon>
    </lineage>
</organism>
<feature type="signal peptide" evidence="2">
    <location>
        <begin position="1"/>
        <end position="17"/>
    </location>
</feature>
<feature type="chain" id="PRO_0000026502" description="Legumain">
    <location>
        <begin position="18"/>
        <end position="323"/>
    </location>
</feature>
<feature type="propeptide" id="PRO_0000026503" evidence="15">
    <location>
        <begin position="324"/>
        <end position="433"/>
    </location>
</feature>
<feature type="active site" evidence="16">
    <location>
        <position position="148"/>
    </location>
</feature>
<feature type="active site" description="Nucleophile" evidence="5">
    <location>
        <position position="189"/>
    </location>
</feature>
<feature type="site" description="Cleavage; by autolysis" evidence="2">
    <location>
        <begin position="323"/>
        <end position="324"/>
    </location>
</feature>
<feature type="glycosylation site" description="N-linked (GlcNAc...) asparagine" evidence="4 5">
    <location>
        <position position="91"/>
    </location>
</feature>
<feature type="glycosylation site" description="N-linked (GlcNAc...) asparagine" evidence="4 5">
    <location>
        <position position="167"/>
    </location>
</feature>
<feature type="glycosylation site" description="N-linked (GlcNAc...) asparagine" evidence="5">
    <location>
        <position position="263"/>
    </location>
</feature>
<feature type="glycosylation site" description="N-linked (GlcNAc...) asparagine" evidence="5">
    <location>
        <position position="272"/>
    </location>
</feature>
<feature type="disulfide bond" evidence="1">
    <location>
        <begin position="378"/>
        <end position="412"/>
    </location>
</feature>
<feature type="disulfide bond" evidence="1">
    <location>
        <begin position="390"/>
        <end position="429"/>
    </location>
</feature>
<feature type="splice variant" id="VSP_056454" description="In isoform 2." evidence="13">
    <location>
        <begin position="341"/>
        <end position="397"/>
    </location>
</feature>
<feature type="splice variant" id="VSP_056455" description="In isoform 3." evidence="13">
    <original>ARHLIEKSVRKIVSLLAASEAEVEQLLSERAP</original>
    <variation>DKIVHGPRVPWSLLKSCLLEAFPSVSAPPTVC</variation>
    <location>
        <begin position="341"/>
        <end position="372"/>
    </location>
</feature>
<feature type="splice variant" id="VSP_056456" description="In isoform 3." evidence="13">
    <location>
        <begin position="373"/>
        <end position="433"/>
    </location>
</feature>
<feature type="sequence variant" id="VAR_024588" description="In dbSNP:rs2236264." evidence="3">
    <original>V</original>
    <variation>I</variation>
    <location>
        <position position="18"/>
    </location>
</feature>
<feature type="mutagenesis site" description="Increases catalytic activity at pH 5.5." evidence="5">
    <original>E</original>
    <variation>K</variation>
    <location>
        <position position="190"/>
    </location>
</feature>
<feature type="mutagenesis site" description="Loss of autoactivation." evidence="2">
    <original>N</original>
    <variation>D</variation>
    <variation>Q</variation>
    <variation>S</variation>
    <location>
        <position position="323"/>
    </location>
</feature>
<feature type="sequence conflict" description="In Ref. 2; BAA09530." evidence="14" ref="2">
    <original>V</original>
    <variation>A</variation>
    <location>
        <position position="31"/>
    </location>
</feature>
<feature type="strand" evidence="19">
    <location>
        <begin position="29"/>
        <end position="35"/>
    </location>
</feature>
<feature type="helix" evidence="19">
    <location>
        <begin position="40"/>
        <end position="42"/>
    </location>
</feature>
<feature type="helix" evidence="19">
    <location>
        <begin position="43"/>
        <end position="58"/>
    </location>
</feature>
<feature type="helix" evidence="19">
    <location>
        <begin position="63"/>
        <end position="65"/>
    </location>
</feature>
<feature type="strand" evidence="19">
    <location>
        <begin position="66"/>
        <end position="69"/>
    </location>
</feature>
<feature type="strand" evidence="18">
    <location>
        <begin position="87"/>
        <end position="89"/>
    </location>
</feature>
<feature type="helix" evidence="19">
    <location>
        <begin position="105"/>
        <end position="107"/>
    </location>
</feature>
<feature type="helix" evidence="19">
    <location>
        <begin position="110"/>
        <end position="118"/>
    </location>
</feature>
<feature type="helix" evidence="19">
    <location>
        <begin position="121"/>
        <end position="124"/>
    </location>
</feature>
<feature type="strand" evidence="19">
    <location>
        <begin position="140"/>
        <end position="147"/>
    </location>
</feature>
<feature type="strand" evidence="19">
    <location>
        <begin position="153"/>
        <end position="155"/>
    </location>
</feature>
<feature type="strand" evidence="19">
    <location>
        <begin position="157"/>
        <end position="162"/>
    </location>
</feature>
<feature type="helix" evidence="19">
    <location>
        <begin position="163"/>
        <end position="175"/>
    </location>
</feature>
<feature type="strand" evidence="19">
    <location>
        <begin position="180"/>
        <end position="188"/>
    </location>
</feature>
<feature type="helix" evidence="19">
    <location>
        <begin position="191"/>
        <end position="194"/>
    </location>
</feature>
<feature type="turn" evidence="19">
    <location>
        <begin position="195"/>
        <end position="197"/>
    </location>
</feature>
<feature type="strand" evidence="19">
    <location>
        <begin position="200"/>
        <end position="210"/>
    </location>
</feature>
<feature type="strand" evidence="19">
    <location>
        <begin position="218"/>
        <end position="222"/>
    </location>
</feature>
<feature type="turn" evidence="19">
    <location>
        <begin position="223"/>
        <end position="226"/>
    </location>
</feature>
<feature type="strand" evidence="19">
    <location>
        <begin position="227"/>
        <end position="231"/>
    </location>
</feature>
<feature type="helix" evidence="19">
    <location>
        <begin position="232"/>
        <end position="243"/>
    </location>
</feature>
<feature type="turn" evidence="19">
    <location>
        <begin position="246"/>
        <end position="248"/>
    </location>
</feature>
<feature type="helix" evidence="19">
    <location>
        <begin position="251"/>
        <end position="261"/>
    </location>
</feature>
<feature type="strand" evidence="19">
    <location>
        <begin position="268"/>
        <end position="271"/>
    </location>
</feature>
<feature type="helix" evidence="19">
    <location>
        <begin position="273"/>
        <end position="277"/>
    </location>
</feature>
<feature type="helix" evidence="19">
    <location>
        <begin position="281"/>
        <end position="284"/>
    </location>
</feature>
<gene>
    <name evidence="9 17" type="primary">LGMN</name>
    <name evidence="10" type="synonym">PRSC1</name>
</gene>
<dbReference type="EC" id="3.4.22.34" evidence="5 8"/>
<dbReference type="EMBL" id="Y09862">
    <property type="protein sequence ID" value="CAA70989.1"/>
    <property type="molecule type" value="mRNA"/>
</dbReference>
<dbReference type="EMBL" id="D55696">
    <property type="protein sequence ID" value="BAA09530.1"/>
    <property type="molecule type" value="mRNA"/>
</dbReference>
<dbReference type="EMBL" id="BX161380">
    <property type="protein sequence ID" value="CAD61872.1"/>
    <property type="molecule type" value="mRNA"/>
</dbReference>
<dbReference type="EMBL" id="BX161422">
    <property type="protein sequence ID" value="CAD61895.1"/>
    <property type="molecule type" value="mRNA"/>
</dbReference>
<dbReference type="EMBL" id="AL132987">
    <property type="status" value="NOT_ANNOTATED_CDS"/>
    <property type="molecule type" value="Genomic_DNA"/>
</dbReference>
<dbReference type="EMBL" id="AL136332">
    <property type="status" value="NOT_ANNOTATED_CDS"/>
    <property type="molecule type" value="Genomic_DNA"/>
</dbReference>
<dbReference type="EMBL" id="BC003061">
    <property type="protein sequence ID" value="AAH03061.1"/>
    <property type="molecule type" value="mRNA"/>
</dbReference>
<dbReference type="CCDS" id="CCDS86423.1">
    <molecule id="Q99538-3"/>
</dbReference>
<dbReference type="CCDS" id="CCDS86424.1">
    <molecule id="Q99538-2"/>
</dbReference>
<dbReference type="CCDS" id="CCDS9904.1">
    <molecule id="Q99538-1"/>
</dbReference>
<dbReference type="RefSeq" id="NP_001008530.1">
    <molecule id="Q99538-1"/>
    <property type="nucleotide sequence ID" value="NM_001008530.3"/>
</dbReference>
<dbReference type="RefSeq" id="NP_001350625.1">
    <molecule id="Q99538-2"/>
    <property type="nucleotide sequence ID" value="NM_001363696.2"/>
</dbReference>
<dbReference type="RefSeq" id="NP_001350628.1">
    <molecule id="Q99538-3"/>
    <property type="nucleotide sequence ID" value="NM_001363699.2"/>
</dbReference>
<dbReference type="RefSeq" id="NP_005597.3">
    <molecule id="Q99538-1"/>
    <property type="nucleotide sequence ID" value="NM_005606.6"/>
</dbReference>
<dbReference type="RefSeq" id="XP_005267919.1">
    <molecule id="Q99538-2"/>
    <property type="nucleotide sequence ID" value="XM_005267862.4"/>
</dbReference>
<dbReference type="RefSeq" id="XP_005267920.1">
    <molecule id="Q99538-3"/>
    <property type="nucleotide sequence ID" value="XM_005267863.4"/>
</dbReference>
<dbReference type="RefSeq" id="XP_016876952.1">
    <molecule id="Q99538-1"/>
    <property type="nucleotide sequence ID" value="XM_017021463.2"/>
</dbReference>
<dbReference type="RefSeq" id="XP_016876953.1">
    <property type="nucleotide sequence ID" value="XM_017021464.1"/>
</dbReference>
<dbReference type="RefSeq" id="XP_016876954.1">
    <property type="nucleotide sequence ID" value="XM_017021465.1"/>
</dbReference>
<dbReference type="RefSeq" id="XP_016876955.1">
    <property type="nucleotide sequence ID" value="XM_017021466.1"/>
</dbReference>
<dbReference type="RefSeq" id="XP_016876956.1">
    <property type="nucleotide sequence ID" value="XM_017021467.1"/>
</dbReference>
<dbReference type="RefSeq" id="XP_047287551.1">
    <molecule id="Q99538-1"/>
    <property type="nucleotide sequence ID" value="XM_047431595.1"/>
</dbReference>
<dbReference type="RefSeq" id="XP_047287553.1">
    <molecule id="Q99538-1"/>
    <property type="nucleotide sequence ID" value="XM_047431597.1"/>
</dbReference>
<dbReference type="RefSeq" id="XP_054232381.1">
    <molecule id="Q99538-1"/>
    <property type="nucleotide sequence ID" value="XM_054376406.1"/>
</dbReference>
<dbReference type="RefSeq" id="XP_054232382.1">
    <molecule id="Q99538-1"/>
    <property type="nucleotide sequence ID" value="XM_054376407.1"/>
</dbReference>
<dbReference type="RefSeq" id="XP_054232383.1">
    <molecule id="Q99538-1"/>
    <property type="nucleotide sequence ID" value="XM_054376408.1"/>
</dbReference>
<dbReference type="RefSeq" id="XP_054232386.1">
    <molecule id="Q99538-2"/>
    <property type="nucleotide sequence ID" value="XM_054376411.1"/>
</dbReference>
<dbReference type="RefSeq" id="XP_054232387.1">
    <molecule id="Q99538-3"/>
    <property type="nucleotide sequence ID" value="XM_054376412.1"/>
</dbReference>
<dbReference type="PDB" id="4AW9">
    <property type="method" value="X-ray"/>
    <property type="resolution" value="2.20 A"/>
    <property type="chains" value="A=26-309"/>
</dbReference>
<dbReference type="PDB" id="4AWA">
    <property type="method" value="X-ray"/>
    <property type="resolution" value="2.50 A"/>
    <property type="chains" value="A=26-309"/>
</dbReference>
<dbReference type="PDB" id="4AWB">
    <property type="method" value="X-ray"/>
    <property type="resolution" value="2.70 A"/>
    <property type="chains" value="A/B=26-309"/>
</dbReference>
<dbReference type="PDB" id="4FGU">
    <property type="method" value="X-ray"/>
    <property type="resolution" value="3.90 A"/>
    <property type="chains" value="A/B=18-433"/>
</dbReference>
<dbReference type="PDB" id="4N6N">
    <property type="method" value="X-ray"/>
    <property type="resolution" value="1.87 A"/>
    <property type="chains" value="A=26-303"/>
</dbReference>
<dbReference type="PDB" id="4N6O">
    <property type="method" value="X-ray"/>
    <property type="resolution" value="1.80 A"/>
    <property type="chains" value="A=26-303"/>
</dbReference>
<dbReference type="PDB" id="5LU8">
    <property type="method" value="X-ray"/>
    <property type="resolution" value="1.95 A"/>
    <property type="chains" value="A=26-288"/>
</dbReference>
<dbReference type="PDB" id="5LU9">
    <property type="method" value="X-ray"/>
    <property type="resolution" value="2.27 A"/>
    <property type="chains" value="A=26-288"/>
</dbReference>
<dbReference type="PDB" id="5LUA">
    <property type="method" value="X-ray"/>
    <property type="resolution" value="2.00 A"/>
    <property type="chains" value="A/B=26-287"/>
</dbReference>
<dbReference type="PDB" id="5LUB">
    <property type="method" value="X-ray"/>
    <property type="resolution" value="2.10 A"/>
    <property type="chains" value="A/B=26-287"/>
</dbReference>
<dbReference type="PDB" id="7FQH">
    <property type="method" value="X-ray"/>
    <property type="resolution" value="2.18 A"/>
    <property type="chains" value="A/B/D=18-433"/>
</dbReference>
<dbReference type="PDB" id="7FQI">
    <property type="method" value="X-ray"/>
    <property type="resolution" value="1.45 A"/>
    <property type="chains" value="A/B/C=18-433"/>
</dbReference>
<dbReference type="PDB" id="7FQJ">
    <property type="method" value="X-ray"/>
    <property type="resolution" value="1.70 A"/>
    <property type="chains" value="A/B/C=18-433"/>
</dbReference>
<dbReference type="PDB" id="7FQK">
    <property type="method" value="X-ray"/>
    <property type="resolution" value="1.97 A"/>
    <property type="chains" value="A/B/C/D=18-433"/>
</dbReference>
<dbReference type="PDB" id="7FQL">
    <property type="method" value="X-ray"/>
    <property type="resolution" value="2.53 A"/>
    <property type="chains" value="A/B/C/D/E/F/G/H=18-433"/>
</dbReference>
<dbReference type="PDB" id="7O50">
    <property type="method" value="X-ray"/>
    <property type="resolution" value="1.90 A"/>
    <property type="chains" value="A/B=26-287"/>
</dbReference>
<dbReference type="PDB" id="8AE4">
    <property type="method" value="X-ray"/>
    <property type="resolution" value="1.79 A"/>
    <property type="chains" value="A=26-288"/>
</dbReference>
<dbReference type="PDB" id="8AE5">
    <property type="method" value="X-ray"/>
    <property type="resolution" value="2.29 A"/>
    <property type="chains" value="A/B=26-288"/>
</dbReference>
<dbReference type="PDBsum" id="4AW9"/>
<dbReference type="PDBsum" id="4AWA"/>
<dbReference type="PDBsum" id="4AWB"/>
<dbReference type="PDBsum" id="4FGU"/>
<dbReference type="PDBsum" id="4N6N"/>
<dbReference type="PDBsum" id="4N6O"/>
<dbReference type="PDBsum" id="5LU8"/>
<dbReference type="PDBsum" id="5LU9"/>
<dbReference type="PDBsum" id="5LUA"/>
<dbReference type="PDBsum" id="5LUB"/>
<dbReference type="PDBsum" id="7FQH"/>
<dbReference type="PDBsum" id="7FQI"/>
<dbReference type="PDBsum" id="7FQJ"/>
<dbReference type="PDBsum" id="7FQK"/>
<dbReference type="PDBsum" id="7FQL"/>
<dbReference type="PDBsum" id="7O50"/>
<dbReference type="PDBsum" id="8AE4"/>
<dbReference type="PDBsum" id="8AE5"/>
<dbReference type="SMR" id="Q99538"/>
<dbReference type="BioGRID" id="111624">
    <property type="interactions" value="56"/>
</dbReference>
<dbReference type="FunCoup" id="Q99538">
    <property type="interactions" value="312"/>
</dbReference>
<dbReference type="IntAct" id="Q99538">
    <property type="interactions" value="30"/>
</dbReference>
<dbReference type="MINT" id="Q99538"/>
<dbReference type="STRING" id="9606.ENSP00000376911"/>
<dbReference type="BindingDB" id="Q99538"/>
<dbReference type="ChEMBL" id="CHEMBL4244"/>
<dbReference type="GuidetoPHARMACOLOGY" id="2380"/>
<dbReference type="MEROPS" id="C13.004"/>
<dbReference type="GlyConnect" id="1449">
    <property type="glycosylation" value="6 N-Linked glycans (2 sites)"/>
</dbReference>
<dbReference type="GlyCosmos" id="Q99538">
    <property type="glycosylation" value="7 sites, 9 glycans"/>
</dbReference>
<dbReference type="GlyGen" id="Q99538">
    <property type="glycosylation" value="8 sites, 28 N-linked glycans (4 sites), 3 O-linked glycans (3 sites)"/>
</dbReference>
<dbReference type="iPTMnet" id="Q99538"/>
<dbReference type="PhosphoSitePlus" id="Q99538"/>
<dbReference type="SwissPalm" id="Q99538"/>
<dbReference type="BioMuta" id="LGMN"/>
<dbReference type="DMDM" id="2842759"/>
<dbReference type="jPOST" id="Q99538"/>
<dbReference type="MassIVE" id="Q99538"/>
<dbReference type="PaxDb" id="9606-ENSP00000376911"/>
<dbReference type="PeptideAtlas" id="Q99538"/>
<dbReference type="ProteomicsDB" id="69735"/>
<dbReference type="ProteomicsDB" id="69736"/>
<dbReference type="ProteomicsDB" id="78313">
    <molecule id="Q99538-1"/>
</dbReference>
<dbReference type="Pumba" id="Q99538"/>
<dbReference type="Antibodypedia" id="17">
    <property type="antibodies" value="336 antibodies from 28 providers"/>
</dbReference>
<dbReference type="DNASU" id="5641"/>
<dbReference type="Ensembl" id="ENST00000334869.9">
    <molecule id="Q99538-1"/>
    <property type="protein sequence ID" value="ENSP00000334052.4"/>
    <property type="gene ID" value="ENSG00000100600.15"/>
</dbReference>
<dbReference type="Ensembl" id="ENST00000393218.6">
    <molecule id="Q99538-1"/>
    <property type="protein sequence ID" value="ENSP00000376911.2"/>
    <property type="gene ID" value="ENSG00000100600.15"/>
</dbReference>
<dbReference type="Ensembl" id="ENST00000555699.5">
    <molecule id="Q99538-3"/>
    <property type="protein sequence ID" value="ENSP00000451861.1"/>
    <property type="gene ID" value="ENSG00000100600.15"/>
</dbReference>
<dbReference type="Ensembl" id="ENST00000557434.5">
    <molecule id="Q99538-2"/>
    <property type="protein sequence ID" value="ENSP00000452572.1"/>
    <property type="gene ID" value="ENSG00000100600.15"/>
</dbReference>
<dbReference type="GeneID" id="5641"/>
<dbReference type="KEGG" id="hsa:5641"/>
<dbReference type="MANE-Select" id="ENST00000334869.9">
    <property type="protein sequence ID" value="ENSP00000334052.4"/>
    <property type="RefSeq nucleotide sequence ID" value="NM_005606.7"/>
    <property type="RefSeq protein sequence ID" value="NP_005597.3"/>
</dbReference>
<dbReference type="UCSC" id="uc001yav.4">
    <molecule id="Q99538-1"/>
    <property type="organism name" value="human"/>
</dbReference>
<dbReference type="AGR" id="HGNC:9472"/>
<dbReference type="CTD" id="5641"/>
<dbReference type="DisGeNET" id="5641"/>
<dbReference type="GeneCards" id="LGMN"/>
<dbReference type="HGNC" id="HGNC:9472">
    <property type="gene designation" value="LGMN"/>
</dbReference>
<dbReference type="HPA" id="ENSG00000100600">
    <property type="expression patterns" value="Low tissue specificity"/>
</dbReference>
<dbReference type="MIM" id="602620">
    <property type="type" value="gene"/>
</dbReference>
<dbReference type="neXtProt" id="NX_Q99538"/>
<dbReference type="OpenTargets" id="ENSG00000100600"/>
<dbReference type="PharmGKB" id="PA30354"/>
<dbReference type="VEuPathDB" id="HostDB:ENSG00000100600"/>
<dbReference type="eggNOG" id="KOG1348">
    <property type="taxonomic scope" value="Eukaryota"/>
</dbReference>
<dbReference type="GeneTree" id="ENSGT00940000154782"/>
<dbReference type="HOGENOM" id="CLU_024160_2_0_1"/>
<dbReference type="InParanoid" id="Q99538"/>
<dbReference type="OMA" id="YPIDRIC"/>
<dbReference type="OrthoDB" id="192611at2759"/>
<dbReference type="PAN-GO" id="Q99538">
    <property type="GO annotations" value="3 GO annotations based on evolutionary models"/>
</dbReference>
<dbReference type="PhylomeDB" id="Q99538"/>
<dbReference type="TreeFam" id="TF313403"/>
<dbReference type="BRENDA" id="3.4.22.34">
    <property type="organism ID" value="2681"/>
</dbReference>
<dbReference type="PathwayCommons" id="Q99538"/>
<dbReference type="Reactome" id="R-HSA-1679131">
    <property type="pathway name" value="Trafficking and processing of endosomal TLR"/>
</dbReference>
<dbReference type="Reactome" id="R-HSA-196791">
    <property type="pathway name" value="Vitamin D (calciferol) metabolism"/>
</dbReference>
<dbReference type="Reactome" id="R-HSA-2132295">
    <property type="pathway name" value="MHC class II antigen presentation"/>
</dbReference>
<dbReference type="SABIO-RK" id="Q99538"/>
<dbReference type="SignaLink" id="Q99538"/>
<dbReference type="SIGNOR" id="Q99538"/>
<dbReference type="BioGRID-ORCS" id="5641">
    <property type="hits" value="8 hits in 1166 CRISPR screens"/>
</dbReference>
<dbReference type="ChiTaRS" id="LGMN">
    <property type="organism name" value="human"/>
</dbReference>
<dbReference type="EvolutionaryTrace" id="Q99538"/>
<dbReference type="GeneWiki" id="LGMN"/>
<dbReference type="GenomeRNAi" id="5641"/>
<dbReference type="Pharos" id="Q99538">
    <property type="development level" value="Tchem"/>
</dbReference>
<dbReference type="PRO" id="PR:Q99538"/>
<dbReference type="Proteomes" id="UP000005640">
    <property type="component" value="Chromosome 14"/>
</dbReference>
<dbReference type="RNAct" id="Q99538">
    <property type="molecule type" value="protein"/>
</dbReference>
<dbReference type="Bgee" id="ENSG00000100600">
    <property type="expression patterns" value="Expressed in synovial joint and 204 other cell types or tissues"/>
</dbReference>
<dbReference type="ExpressionAtlas" id="Q99538">
    <property type="expression patterns" value="baseline and differential"/>
</dbReference>
<dbReference type="GO" id="GO:0045177">
    <property type="term" value="C:apical part of cell"/>
    <property type="evidence" value="ECO:0007669"/>
    <property type="project" value="Ensembl"/>
</dbReference>
<dbReference type="GO" id="GO:0005737">
    <property type="term" value="C:cytoplasm"/>
    <property type="evidence" value="ECO:0000314"/>
    <property type="project" value="ARUK-UCL"/>
</dbReference>
<dbReference type="GO" id="GO:0036021">
    <property type="term" value="C:endolysosome lumen"/>
    <property type="evidence" value="ECO:0000304"/>
    <property type="project" value="Reactome"/>
</dbReference>
<dbReference type="GO" id="GO:0070062">
    <property type="term" value="C:extracellular exosome"/>
    <property type="evidence" value="ECO:0007005"/>
    <property type="project" value="UniProtKB"/>
</dbReference>
<dbReference type="GO" id="GO:0005576">
    <property type="term" value="C:extracellular region"/>
    <property type="evidence" value="ECO:0000314"/>
    <property type="project" value="ARUK-UCL"/>
</dbReference>
<dbReference type="GO" id="GO:0005770">
    <property type="term" value="C:late endosome"/>
    <property type="evidence" value="ECO:0000304"/>
    <property type="project" value="ARUK-UCL"/>
</dbReference>
<dbReference type="GO" id="GO:0043202">
    <property type="term" value="C:lysosomal lumen"/>
    <property type="evidence" value="ECO:0000314"/>
    <property type="project" value="UniProtKB"/>
</dbReference>
<dbReference type="GO" id="GO:0005764">
    <property type="term" value="C:lysosome"/>
    <property type="evidence" value="ECO:0000250"/>
    <property type="project" value="UniProtKB"/>
</dbReference>
<dbReference type="GO" id="GO:0048471">
    <property type="term" value="C:perinuclear region of cytoplasm"/>
    <property type="evidence" value="ECO:0000314"/>
    <property type="project" value="ARUK-UCL"/>
</dbReference>
<dbReference type="GO" id="GO:0004197">
    <property type="term" value="F:cysteine-type endopeptidase activity"/>
    <property type="evidence" value="ECO:0000314"/>
    <property type="project" value="UniProtKB"/>
</dbReference>
<dbReference type="GO" id="GO:0061133">
    <property type="term" value="F:endopeptidase activator activity"/>
    <property type="evidence" value="ECO:0000314"/>
    <property type="project" value="ARUK-UCL"/>
</dbReference>
<dbReference type="GO" id="GO:0008233">
    <property type="term" value="F:peptidase activity"/>
    <property type="evidence" value="ECO:0000314"/>
    <property type="project" value="MGI"/>
</dbReference>
<dbReference type="GO" id="GO:0048156">
    <property type="term" value="F:tau protein binding"/>
    <property type="evidence" value="ECO:0000303"/>
    <property type="project" value="ARUK-UCL"/>
</dbReference>
<dbReference type="GO" id="GO:0019886">
    <property type="term" value="P:antigen processing and presentation of exogenous peptide antigen via MHC class II"/>
    <property type="evidence" value="ECO:0000314"/>
    <property type="project" value="UniProtKB"/>
</dbReference>
<dbReference type="GO" id="GO:0008306">
    <property type="term" value="P:associative learning"/>
    <property type="evidence" value="ECO:0000250"/>
    <property type="project" value="ARUK-UCL"/>
</dbReference>
<dbReference type="GO" id="GO:1904646">
    <property type="term" value="P:cellular response to amyloid-beta"/>
    <property type="evidence" value="ECO:0000314"/>
    <property type="project" value="ARUK-UCL"/>
</dbReference>
<dbReference type="GO" id="GO:0071277">
    <property type="term" value="P:cellular response to calcium ion"/>
    <property type="evidence" value="ECO:0000314"/>
    <property type="project" value="ARUK-UCL"/>
</dbReference>
<dbReference type="GO" id="GO:0035729">
    <property type="term" value="P:cellular response to hepatocyte growth factor stimulus"/>
    <property type="evidence" value="ECO:0000314"/>
    <property type="project" value="ARUK-UCL"/>
</dbReference>
<dbReference type="GO" id="GO:0097061">
    <property type="term" value="P:dendritic spine organization"/>
    <property type="evidence" value="ECO:0000250"/>
    <property type="project" value="ARUK-UCL"/>
</dbReference>
<dbReference type="GO" id="GO:0007613">
    <property type="term" value="P:memory"/>
    <property type="evidence" value="ECO:0000250"/>
    <property type="project" value="ARUK-UCL"/>
</dbReference>
<dbReference type="GO" id="GO:1901185">
    <property type="term" value="P:negative regulation of ERBB signaling pathway"/>
    <property type="evidence" value="ECO:0000250"/>
    <property type="project" value="UniProtKB"/>
</dbReference>
<dbReference type="GO" id="GO:0010629">
    <property type="term" value="P:negative regulation of gene expression"/>
    <property type="evidence" value="ECO:0000315"/>
    <property type="project" value="ARUK-UCL"/>
</dbReference>
<dbReference type="GO" id="GO:0040015">
    <property type="term" value="P:negative regulation of multicellular organism growth"/>
    <property type="evidence" value="ECO:0007669"/>
    <property type="project" value="Ensembl"/>
</dbReference>
<dbReference type="GO" id="GO:0043524">
    <property type="term" value="P:negative regulation of neuron apoptotic process"/>
    <property type="evidence" value="ECO:0000316"/>
    <property type="project" value="MGI"/>
</dbReference>
<dbReference type="GO" id="GO:0008284">
    <property type="term" value="P:positive regulation of cell population proliferation"/>
    <property type="evidence" value="ECO:0000315"/>
    <property type="project" value="ARUK-UCL"/>
</dbReference>
<dbReference type="GO" id="GO:2001028">
    <property type="term" value="P:positive regulation of endothelial cell chemotaxis"/>
    <property type="evidence" value="ECO:0000314"/>
    <property type="project" value="ARUK-UCL"/>
</dbReference>
<dbReference type="GO" id="GO:1900273">
    <property type="term" value="P:positive regulation of long-term synaptic potentiation"/>
    <property type="evidence" value="ECO:0000250"/>
    <property type="project" value="ARUK-UCL"/>
</dbReference>
<dbReference type="GO" id="GO:0045931">
    <property type="term" value="P:positive regulation of mitotic cell cycle"/>
    <property type="evidence" value="ECO:0000315"/>
    <property type="project" value="ARUK-UCL"/>
</dbReference>
<dbReference type="GO" id="GO:0090026">
    <property type="term" value="P:positive regulation of monocyte chemotaxis"/>
    <property type="evidence" value="ECO:0000314"/>
    <property type="project" value="ARUK-UCL"/>
</dbReference>
<dbReference type="GO" id="GO:0051604">
    <property type="term" value="P:protein maturation"/>
    <property type="evidence" value="ECO:0000250"/>
    <property type="project" value="UniProt"/>
</dbReference>
<dbReference type="GO" id="GO:0006508">
    <property type="term" value="P:proteolysis"/>
    <property type="evidence" value="ECO:0000250"/>
    <property type="project" value="UniProtKB"/>
</dbReference>
<dbReference type="GO" id="GO:0051603">
    <property type="term" value="P:proteolysis involved in protein catabolic process"/>
    <property type="evidence" value="ECO:0000250"/>
    <property type="project" value="UniProtKB"/>
</dbReference>
<dbReference type="GO" id="GO:0032801">
    <property type="term" value="P:receptor catabolic process"/>
    <property type="evidence" value="ECO:0000250"/>
    <property type="project" value="UniProtKB"/>
</dbReference>
<dbReference type="GO" id="GO:0003014">
    <property type="term" value="P:renal system process"/>
    <property type="evidence" value="ECO:0000250"/>
    <property type="project" value="UniProtKB"/>
</dbReference>
<dbReference type="GO" id="GO:0010447">
    <property type="term" value="P:response to acidic pH"/>
    <property type="evidence" value="ECO:0000314"/>
    <property type="project" value="ARUK-UCL"/>
</dbReference>
<dbReference type="GO" id="GO:0006624">
    <property type="term" value="P:vacuolar protein processing"/>
    <property type="evidence" value="ECO:0000318"/>
    <property type="project" value="GO_Central"/>
</dbReference>
<dbReference type="GO" id="GO:0042359">
    <property type="term" value="P:vitamin D metabolic process"/>
    <property type="evidence" value="ECO:0000304"/>
    <property type="project" value="Reactome"/>
</dbReference>
<dbReference type="CDD" id="cd21115">
    <property type="entry name" value="legumain_C"/>
    <property type="match status" value="1"/>
</dbReference>
<dbReference type="FunFam" id="3.40.50.1460:FF:000006">
    <property type="entry name" value="Legumain"/>
    <property type="match status" value="1"/>
</dbReference>
<dbReference type="FunFam" id="1.10.132.130:FF:000002">
    <property type="entry name" value="Legumain preproprotein"/>
    <property type="match status" value="1"/>
</dbReference>
<dbReference type="Gene3D" id="1.10.132.130">
    <property type="match status" value="1"/>
</dbReference>
<dbReference type="Gene3D" id="3.40.50.1460">
    <property type="match status" value="1"/>
</dbReference>
<dbReference type="InterPro" id="IPR043577">
    <property type="entry name" value="AE"/>
</dbReference>
<dbReference type="InterPro" id="IPR048501">
    <property type="entry name" value="Legum_prodom"/>
</dbReference>
<dbReference type="InterPro" id="IPR046427">
    <property type="entry name" value="Legumain_prodom_sf"/>
</dbReference>
<dbReference type="InterPro" id="IPR001096">
    <property type="entry name" value="Peptidase_C13"/>
</dbReference>
<dbReference type="PANTHER" id="PTHR12000">
    <property type="entry name" value="HEMOGLOBINASE FAMILY MEMBER"/>
    <property type="match status" value="1"/>
</dbReference>
<dbReference type="PANTHER" id="PTHR12000:SF38">
    <property type="entry name" value="LEGUMAIN"/>
    <property type="match status" value="1"/>
</dbReference>
<dbReference type="Pfam" id="PF20985">
    <property type="entry name" value="Legum_prodom"/>
    <property type="match status" value="1"/>
</dbReference>
<dbReference type="Pfam" id="PF01650">
    <property type="entry name" value="Peptidase_C13"/>
    <property type="match status" value="1"/>
</dbReference>
<dbReference type="PIRSF" id="PIRSF500139">
    <property type="entry name" value="AE"/>
    <property type="match status" value="1"/>
</dbReference>
<dbReference type="PIRSF" id="PIRSF019663">
    <property type="entry name" value="Legumain"/>
    <property type="match status" value="1"/>
</dbReference>
<dbReference type="PRINTS" id="PR00776">
    <property type="entry name" value="HEMOGLOBNASE"/>
</dbReference>
<name>LGMN_HUMAN</name>
<evidence type="ECO:0000250" key="1">
    <source>
        <dbReference type="UniProtKB" id="O89017"/>
    </source>
</evidence>
<evidence type="ECO:0000269" key="2">
    <source>
    </source>
</evidence>
<evidence type="ECO:0000269" key="3">
    <source>
    </source>
</evidence>
<evidence type="ECO:0000269" key="4">
    <source>
    </source>
</evidence>
<evidence type="ECO:0000269" key="5">
    <source>
    </source>
</evidence>
<evidence type="ECO:0000269" key="6">
    <source>
    </source>
</evidence>
<evidence type="ECO:0000269" key="7">
    <source>
    </source>
</evidence>
<evidence type="ECO:0000269" key="8">
    <source>
    </source>
</evidence>
<evidence type="ECO:0000303" key="9">
    <source>
    </source>
</evidence>
<evidence type="ECO:0000303" key="10">
    <source>
    </source>
</evidence>
<evidence type="ECO:0000303" key="11">
    <source>
    </source>
</evidence>
<evidence type="ECO:0000303" key="12">
    <source>
    </source>
</evidence>
<evidence type="ECO:0000303" key="13">
    <source ref="3"/>
</evidence>
<evidence type="ECO:0000305" key="14"/>
<evidence type="ECO:0000305" key="15">
    <source>
    </source>
</evidence>
<evidence type="ECO:0000305" key="16">
    <source>
    </source>
</evidence>
<evidence type="ECO:0000312" key="17">
    <source>
        <dbReference type="HGNC" id="HGNC:9472"/>
    </source>
</evidence>
<evidence type="ECO:0007829" key="18">
    <source>
        <dbReference type="PDB" id="4AW9"/>
    </source>
</evidence>
<evidence type="ECO:0007829" key="19">
    <source>
        <dbReference type="PDB" id="7FQI"/>
    </source>
</evidence>
<reference key="1">
    <citation type="journal article" date="1997" name="J. Biol. Chem.">
        <title>Cloning, isolation, and characterization of mammalian legumain, an asparaginyl endopeptidase.</title>
        <authorList>
            <person name="Chen J.-M."/>
            <person name="Dando P.M."/>
            <person name="Rawlings N.D."/>
            <person name="Brown M.A."/>
            <person name="Young N.E."/>
            <person name="Stevens R.A.E."/>
            <person name="Hewitt E."/>
            <person name="Watts C."/>
            <person name="Barrett A.J."/>
        </authorList>
    </citation>
    <scope>NUCLEOTIDE SEQUENCE [MRNA] (ISOFORM 1)</scope>
    <source>
        <tissue>Placenta</tissue>
    </source>
</reference>
<reference key="2">
    <citation type="journal article" date="1996" name="Cytogenet. Cell Genet.">
        <title>Molecular cloning of a human cDNA encoding putative cysteine protease (PRSC1) and its chromosome assignment to 14q32.1.</title>
        <authorList>
            <person name="Tanaka T."/>
            <person name="Inazawa J."/>
            <person name="Nakamura Y."/>
        </authorList>
    </citation>
    <scope>NUCLEOTIDE SEQUENCE [MRNA] (ISOFORM 1)</scope>
    <scope>TISSUE SPECIFICITY</scope>
    <source>
        <tissue>Heart</tissue>
    </source>
</reference>
<reference key="3">
    <citation type="submission" date="2003-01" db="EMBL/GenBank/DDBJ databases">
        <title>Full-length cDNA libraries and normalization.</title>
        <authorList>
            <person name="Li W.B."/>
            <person name="Gruber C."/>
            <person name="Jessee J."/>
            <person name="Polayes D."/>
        </authorList>
    </citation>
    <scope>NUCLEOTIDE SEQUENCE [LARGE SCALE MRNA] (ISOFORMS 2 AND 3)</scope>
    <source>
        <tissue>Neuroblastoma</tissue>
        <tissue>Placenta</tissue>
    </source>
</reference>
<reference key="4">
    <citation type="journal article" date="2003" name="Nature">
        <title>The DNA sequence and analysis of human chromosome 14.</title>
        <authorList>
            <person name="Heilig R."/>
            <person name="Eckenberg R."/>
            <person name="Petit J.-L."/>
            <person name="Fonknechten N."/>
            <person name="Da Silva C."/>
            <person name="Cattolico L."/>
            <person name="Levy M."/>
            <person name="Barbe V."/>
            <person name="De Berardinis V."/>
            <person name="Ureta-Vidal A."/>
            <person name="Pelletier E."/>
            <person name="Vico V."/>
            <person name="Anthouard V."/>
            <person name="Rowen L."/>
            <person name="Madan A."/>
            <person name="Qin S."/>
            <person name="Sun H."/>
            <person name="Du H."/>
            <person name="Pepin K."/>
            <person name="Artiguenave F."/>
            <person name="Robert C."/>
            <person name="Cruaud C."/>
            <person name="Bruels T."/>
            <person name="Jaillon O."/>
            <person name="Friedlander L."/>
            <person name="Samson G."/>
            <person name="Brottier P."/>
            <person name="Cure S."/>
            <person name="Segurens B."/>
            <person name="Aniere F."/>
            <person name="Samain S."/>
            <person name="Crespeau H."/>
            <person name="Abbasi N."/>
            <person name="Aiach N."/>
            <person name="Boscus D."/>
            <person name="Dickhoff R."/>
            <person name="Dors M."/>
            <person name="Dubois I."/>
            <person name="Friedman C."/>
            <person name="Gouyvenoux M."/>
            <person name="James R."/>
            <person name="Madan A."/>
            <person name="Mairey-Estrada B."/>
            <person name="Mangenot S."/>
            <person name="Martins N."/>
            <person name="Menard M."/>
            <person name="Oztas S."/>
            <person name="Ratcliffe A."/>
            <person name="Shaffer T."/>
            <person name="Trask B."/>
            <person name="Vacherie B."/>
            <person name="Bellemere C."/>
            <person name="Belser C."/>
            <person name="Besnard-Gonnet M."/>
            <person name="Bartol-Mavel D."/>
            <person name="Boutard M."/>
            <person name="Briez-Silla S."/>
            <person name="Combette S."/>
            <person name="Dufosse-Laurent V."/>
            <person name="Ferron C."/>
            <person name="Lechaplais C."/>
            <person name="Louesse C."/>
            <person name="Muselet D."/>
            <person name="Magdelenat G."/>
            <person name="Pateau E."/>
            <person name="Petit E."/>
            <person name="Sirvain-Trukniewicz P."/>
            <person name="Trybou A."/>
            <person name="Vega-Czarny N."/>
            <person name="Bataille E."/>
            <person name="Bluet E."/>
            <person name="Bordelais I."/>
            <person name="Dubois M."/>
            <person name="Dumont C."/>
            <person name="Guerin T."/>
            <person name="Haffray S."/>
            <person name="Hammadi R."/>
            <person name="Muanga J."/>
            <person name="Pellouin V."/>
            <person name="Robert D."/>
            <person name="Wunderle E."/>
            <person name="Gauguet G."/>
            <person name="Roy A."/>
            <person name="Sainte-Marthe L."/>
            <person name="Verdier J."/>
            <person name="Verdier-Discala C."/>
            <person name="Hillier L.W."/>
            <person name="Fulton L."/>
            <person name="McPherson J."/>
            <person name="Matsuda F."/>
            <person name="Wilson R."/>
            <person name="Scarpelli C."/>
            <person name="Gyapay G."/>
            <person name="Wincker P."/>
            <person name="Saurin W."/>
            <person name="Quetier F."/>
            <person name="Waterston R."/>
            <person name="Hood L."/>
            <person name="Weissenbach J."/>
        </authorList>
    </citation>
    <scope>NUCLEOTIDE SEQUENCE [LARGE SCALE GENOMIC DNA]</scope>
</reference>
<reference key="5">
    <citation type="journal article" date="2004" name="Genome Res.">
        <title>The status, quality, and expansion of the NIH full-length cDNA project: the Mammalian Gene Collection (MGC).</title>
        <authorList>
            <consortium name="The MGC Project Team"/>
        </authorList>
    </citation>
    <scope>NUCLEOTIDE SEQUENCE [LARGE SCALE MRNA] (ISOFORM 1)</scope>
    <scope>VARIANT ILE-18</scope>
    <source>
        <tissue>Placenta</tissue>
    </source>
</reference>
<reference key="6">
    <citation type="journal article" date="2000" name="Biochem. J.">
        <title>Activation of human prolegumain by cleavage at a C-terminal asparagine residue.</title>
        <authorList>
            <person name="Chen J.-M."/>
            <person name="Fortunato M."/>
            <person name="Barrett A.J."/>
        </authorList>
    </citation>
    <scope>PROTEIN SEQUENCE OF 18-24 AND 324-330</scope>
    <scope>PROTEOLYTIC PROCESSING</scope>
    <scope>MUTAGENESIS OF ASN-323</scope>
</reference>
<reference key="7">
    <citation type="journal article" date="1998" name="Nature">
        <title>An asparaginyl endopeptidase processes a microbial antigen for class II MHC presentation.</title>
        <authorList>
            <person name="Manoury B."/>
            <person name="Hewitt E.W."/>
            <person name="Morrice N."/>
            <person name="Dando P.M."/>
            <person name="Barrett A.J."/>
            <person name="Watts C."/>
        </authorList>
    </citation>
    <scope>FUNCTION</scope>
    <scope>CATALYTIC ACTIVITY</scope>
    <scope>SUBCELLULAR LOCATION</scope>
</reference>
<reference key="8">
    <citation type="journal article" date="1998" name="FEBS Lett.">
        <title>Autocatalytic activation of human legumain at aspartic acid residues.</title>
        <authorList>
            <person name="Halfon S."/>
            <person name="Patel S."/>
            <person name="Vega F."/>
            <person name="Zurawski S."/>
            <person name="Zurawski G."/>
        </authorList>
    </citation>
    <scope>CHARACTERIZATION OF ACTIVITY ON ASPARTATE BONDS</scope>
    <scope>AUTOCATALYTIC CLEAVAGE</scope>
</reference>
<reference key="9">
    <citation type="journal article" date="2009" name="J. Proteome Res.">
        <title>Glycoproteomics analysis of human liver tissue by combination of multiple enzyme digestion and hydrazide chemistry.</title>
        <authorList>
            <person name="Chen R."/>
            <person name="Jiang X."/>
            <person name="Sun D."/>
            <person name="Han G."/>
            <person name="Wang F."/>
            <person name="Ye M."/>
            <person name="Wang L."/>
            <person name="Zou H."/>
        </authorList>
    </citation>
    <scope>GLYCOSYLATION [LARGE SCALE ANALYSIS] AT ASN-91 AND ASN-167</scope>
    <source>
        <tissue>Liver</tissue>
    </source>
</reference>
<reference key="10">
    <citation type="journal article" date="2011" name="BMC Syst. Biol.">
        <title>Initial characterization of the human central proteome.</title>
        <authorList>
            <person name="Burkard T.R."/>
            <person name="Planyavsky M."/>
            <person name="Kaupe I."/>
            <person name="Breitwieser F.P."/>
            <person name="Buerckstuemmer T."/>
            <person name="Bennett K.L."/>
            <person name="Superti-Furga G."/>
            <person name="Colinge J."/>
        </authorList>
    </citation>
    <scope>IDENTIFICATION BY MASS SPECTROMETRY [LARGE SCALE ANALYSIS]</scope>
</reference>
<reference key="11">
    <citation type="journal article" date="2014" name="J. Proteomics">
        <title>An enzyme assisted RP-RPLC approach for in-depth analysis of human liver phosphoproteome.</title>
        <authorList>
            <person name="Bian Y."/>
            <person name="Song C."/>
            <person name="Cheng K."/>
            <person name="Dong M."/>
            <person name="Wang F."/>
            <person name="Huang J."/>
            <person name="Sun D."/>
            <person name="Wang L."/>
            <person name="Ye M."/>
            <person name="Zou H."/>
        </authorList>
    </citation>
    <scope>IDENTIFICATION BY MASS SPECTROMETRY [LARGE SCALE ANALYSIS]</scope>
    <source>
        <tissue>Liver</tissue>
    </source>
</reference>
<reference key="12">
    <citation type="journal article" date="2019" name="Genet. Med.">
        <title>Deficiency of the human cysteine protease inhibitor cystatin M/E causes hypotrichosis and dry skin.</title>
        <authorList>
            <person name="van den Bogaard E.H.J."/>
            <person name="van Geel M."/>
            <person name="van Vlijmen-Willems I.M.J.J."/>
            <person name="Jansen P.A.M."/>
            <person name="Peppelman M."/>
            <person name="van Erp P.E.J."/>
            <person name="Atalay S."/>
            <person name="Venselaar H."/>
            <person name="Simon M.E.H."/>
            <person name="Joosten M."/>
            <person name="Schalkwijk J."/>
            <person name="Zeeuwen P.L.J.M."/>
        </authorList>
    </citation>
    <scope>ACTIVITY REGULATION</scope>
</reference>
<reference key="13">
    <citation type="journal article" date="2013" name="Proc. Natl. Acad. Sci. U.S.A.">
        <title>Mechanistic and structural studies on legumain explain its zymogenicity, distinct activation pathways, and regulation.</title>
        <authorList>
            <person name="Dall E."/>
            <person name="Brandstetter H."/>
        </authorList>
    </citation>
    <scope>X-RAY CRYSTALLOGRAPHY (2.2 ANGSTROMS) OF 26-309</scope>
    <scope>FUNCTION</scope>
    <scope>CATALYTIC ACTIVITY</scope>
    <scope>BIOPHYSICOCHEMICAL PROPERTIES</scope>
    <scope>ACTIVE SITE</scope>
    <scope>PROPEPTIDE</scope>
    <scope>GLYCOSYLATION AT ASN-91; ASN-167; ASN-263 AND ASN-272</scope>
    <scope>SUBUNIT</scope>
    <scope>DOMAIN</scope>
    <scope>MUTAGENESIS OF GLU-190</scope>
    <scope>AUTOCATALYTIC PROCESSING</scope>
</reference>
<proteinExistence type="evidence at protein level"/>